<sequence>MQFIDQANIILKAGKGGNGIVSFRREKFVPAGGPSGGNGGKGGSIIIIADNNLQTLLDFKFNREIFAKDGFKGGPNKRSGASGENTILKVPCGTEIRDFNTGIILGDLTEDKQSLTIAHGGRGGHGNAYYLSNQNRAPESFTEGKEGEIWEVQLELKLLAEVGIIGLPNAGKSTLISVLSSARPKIANYPFTTLIPNLGVVRKADGNGCLFADIPGLISGAAEGVGLGHDFLRHIQRTKILIHLIDSIAENPIRDFEIIEKELKRYGSGLLNKERIVVLNKMELVDENYLQTITKKLENLSKKKVLVISSSLRKGLSPLLSEVWKRI</sequence>
<evidence type="ECO:0000255" key="1">
    <source>
        <dbReference type="HAMAP-Rule" id="MF_01454"/>
    </source>
</evidence>
<evidence type="ECO:0000255" key="2">
    <source>
        <dbReference type="PROSITE-ProRule" id="PRU01231"/>
    </source>
</evidence>
<keyword id="KW-0067">ATP-binding</keyword>
<keyword id="KW-0963">Cytoplasm</keyword>
<keyword id="KW-0342">GTP-binding</keyword>
<keyword id="KW-0378">Hydrolase</keyword>
<keyword id="KW-0460">Magnesium</keyword>
<keyword id="KW-0479">Metal-binding</keyword>
<keyword id="KW-0547">Nucleotide-binding</keyword>
<proteinExistence type="inferred from homology"/>
<organism>
    <name type="scientific">Prochlorococcus marinus subsp. pastoris (strain CCMP1986 / NIES-2087 / MED4)</name>
    <dbReference type="NCBI Taxonomy" id="59919"/>
    <lineage>
        <taxon>Bacteria</taxon>
        <taxon>Bacillati</taxon>
        <taxon>Cyanobacteriota</taxon>
        <taxon>Cyanophyceae</taxon>
        <taxon>Synechococcales</taxon>
        <taxon>Prochlorococcaceae</taxon>
        <taxon>Prochlorococcus</taxon>
    </lineage>
</organism>
<comment type="function">
    <text evidence="1">An essential GTPase which binds GTP, GDP and possibly (p)ppGpp with moderate affinity, with high nucleotide exchange rates and a fairly low GTP hydrolysis rate. Plays a role in control of the cell cycle, stress response, ribosome biogenesis and in those bacteria that undergo differentiation, in morphogenesis control.</text>
</comment>
<comment type="cofactor">
    <cofactor evidence="1">
        <name>Mg(2+)</name>
        <dbReference type="ChEBI" id="CHEBI:18420"/>
    </cofactor>
</comment>
<comment type="subunit">
    <text evidence="1">Monomer.</text>
</comment>
<comment type="subcellular location">
    <subcellularLocation>
        <location evidence="1">Cytoplasm</location>
    </subcellularLocation>
</comment>
<comment type="similarity">
    <text evidence="1">Belongs to the TRAFAC class OBG-HflX-like GTPase superfamily. OBG GTPase family.</text>
</comment>
<gene>
    <name evidence="1" type="primary">obg</name>
    <name type="ordered locus">PMM0218</name>
</gene>
<feature type="chain" id="PRO_0000386142" description="GTPase Obg">
    <location>
        <begin position="1"/>
        <end position="327"/>
    </location>
</feature>
<feature type="domain" description="Obg" evidence="2">
    <location>
        <begin position="1"/>
        <end position="159"/>
    </location>
</feature>
<feature type="domain" description="OBG-type G" evidence="1">
    <location>
        <begin position="160"/>
        <end position="327"/>
    </location>
</feature>
<feature type="binding site" evidence="1">
    <location>
        <begin position="166"/>
        <end position="173"/>
    </location>
    <ligand>
        <name>ATP</name>
        <dbReference type="ChEBI" id="CHEBI:30616"/>
    </ligand>
</feature>
<feature type="binding site" evidence="1">
    <location>
        <position position="173"/>
    </location>
    <ligand>
        <name>Mg(2+)</name>
        <dbReference type="ChEBI" id="CHEBI:18420"/>
    </ligand>
</feature>
<feature type="binding site" evidence="1">
    <location>
        <begin position="191"/>
        <end position="195"/>
    </location>
    <ligand>
        <name>ATP</name>
        <dbReference type="ChEBI" id="CHEBI:30616"/>
    </ligand>
</feature>
<feature type="binding site" evidence="1">
    <location>
        <position position="193"/>
    </location>
    <ligand>
        <name>Mg(2+)</name>
        <dbReference type="ChEBI" id="CHEBI:18420"/>
    </ligand>
</feature>
<feature type="binding site" evidence="1">
    <location>
        <begin position="213"/>
        <end position="216"/>
    </location>
    <ligand>
        <name>ATP</name>
        <dbReference type="ChEBI" id="CHEBI:30616"/>
    </ligand>
</feature>
<feature type="binding site" evidence="1">
    <location>
        <begin position="280"/>
        <end position="283"/>
    </location>
    <ligand>
        <name>ATP</name>
        <dbReference type="ChEBI" id="CHEBI:30616"/>
    </ligand>
</feature>
<feature type="binding site" evidence="1">
    <location>
        <begin position="309"/>
        <end position="311"/>
    </location>
    <ligand>
        <name>ATP</name>
        <dbReference type="ChEBI" id="CHEBI:30616"/>
    </ligand>
</feature>
<protein>
    <recommendedName>
        <fullName evidence="1">GTPase Obg</fullName>
        <ecNumber evidence="1">3.6.5.-</ecNumber>
    </recommendedName>
    <alternativeName>
        <fullName evidence="1">GTP-binding protein Obg</fullName>
    </alternativeName>
</protein>
<accession>Q7V368</accession>
<name>OBG_PROMP</name>
<reference key="1">
    <citation type="journal article" date="2003" name="Nature">
        <title>Genome divergence in two Prochlorococcus ecotypes reflects oceanic niche differentiation.</title>
        <authorList>
            <person name="Rocap G."/>
            <person name="Larimer F.W."/>
            <person name="Lamerdin J.E."/>
            <person name="Malfatti S."/>
            <person name="Chain P."/>
            <person name="Ahlgren N.A."/>
            <person name="Arellano A."/>
            <person name="Coleman M."/>
            <person name="Hauser L."/>
            <person name="Hess W.R."/>
            <person name="Johnson Z.I."/>
            <person name="Land M.L."/>
            <person name="Lindell D."/>
            <person name="Post A.F."/>
            <person name="Regala W."/>
            <person name="Shah M."/>
            <person name="Shaw S.L."/>
            <person name="Steglich C."/>
            <person name="Sullivan M.B."/>
            <person name="Ting C.S."/>
            <person name="Tolonen A."/>
            <person name="Webb E.A."/>
            <person name="Zinser E.R."/>
            <person name="Chisholm S.W."/>
        </authorList>
    </citation>
    <scope>NUCLEOTIDE SEQUENCE [LARGE SCALE GENOMIC DNA]</scope>
    <source>
        <strain>CCMP1986 / NIES-2087 / MED4</strain>
    </source>
</reference>
<dbReference type="EC" id="3.6.5.-" evidence="1"/>
<dbReference type="EMBL" id="BX548174">
    <property type="protein sequence ID" value="CAE18677.1"/>
    <property type="molecule type" value="Genomic_DNA"/>
</dbReference>
<dbReference type="SMR" id="Q7V368"/>
<dbReference type="STRING" id="59919.PMM0218"/>
<dbReference type="KEGG" id="pmm:PMM0218"/>
<dbReference type="eggNOG" id="COG0536">
    <property type="taxonomic scope" value="Bacteria"/>
</dbReference>
<dbReference type="HOGENOM" id="CLU_011747_2_0_3"/>
<dbReference type="OrthoDB" id="9807318at2"/>
<dbReference type="Proteomes" id="UP000001026">
    <property type="component" value="Chromosome"/>
</dbReference>
<dbReference type="GO" id="GO:0005737">
    <property type="term" value="C:cytoplasm"/>
    <property type="evidence" value="ECO:0007669"/>
    <property type="project" value="UniProtKB-SubCell"/>
</dbReference>
<dbReference type="GO" id="GO:0005524">
    <property type="term" value="F:ATP binding"/>
    <property type="evidence" value="ECO:0007669"/>
    <property type="project" value="UniProtKB-KW"/>
</dbReference>
<dbReference type="GO" id="GO:0005525">
    <property type="term" value="F:GTP binding"/>
    <property type="evidence" value="ECO:0007669"/>
    <property type="project" value="UniProtKB-UniRule"/>
</dbReference>
<dbReference type="GO" id="GO:0003924">
    <property type="term" value="F:GTPase activity"/>
    <property type="evidence" value="ECO:0007669"/>
    <property type="project" value="UniProtKB-UniRule"/>
</dbReference>
<dbReference type="GO" id="GO:0000287">
    <property type="term" value="F:magnesium ion binding"/>
    <property type="evidence" value="ECO:0007669"/>
    <property type="project" value="InterPro"/>
</dbReference>
<dbReference type="GO" id="GO:0042254">
    <property type="term" value="P:ribosome biogenesis"/>
    <property type="evidence" value="ECO:0007669"/>
    <property type="project" value="UniProtKB-UniRule"/>
</dbReference>
<dbReference type="CDD" id="cd01898">
    <property type="entry name" value="Obg"/>
    <property type="match status" value="1"/>
</dbReference>
<dbReference type="FunFam" id="2.70.210.12:FF:000001">
    <property type="entry name" value="GTPase Obg"/>
    <property type="match status" value="1"/>
</dbReference>
<dbReference type="Gene3D" id="2.70.210.12">
    <property type="entry name" value="GTP1/OBG domain"/>
    <property type="match status" value="1"/>
</dbReference>
<dbReference type="Gene3D" id="3.40.50.300">
    <property type="entry name" value="P-loop containing nucleotide triphosphate hydrolases"/>
    <property type="match status" value="1"/>
</dbReference>
<dbReference type="HAMAP" id="MF_01454">
    <property type="entry name" value="GTPase_Obg"/>
    <property type="match status" value="1"/>
</dbReference>
<dbReference type="InterPro" id="IPR031167">
    <property type="entry name" value="G_OBG"/>
</dbReference>
<dbReference type="InterPro" id="IPR006073">
    <property type="entry name" value="GTP-bd"/>
</dbReference>
<dbReference type="InterPro" id="IPR014100">
    <property type="entry name" value="GTP-bd_Obg/CgtA"/>
</dbReference>
<dbReference type="InterPro" id="IPR006169">
    <property type="entry name" value="GTP1_OBG_dom"/>
</dbReference>
<dbReference type="InterPro" id="IPR036726">
    <property type="entry name" value="GTP1_OBG_dom_sf"/>
</dbReference>
<dbReference type="InterPro" id="IPR045086">
    <property type="entry name" value="OBG_GTPase"/>
</dbReference>
<dbReference type="InterPro" id="IPR027417">
    <property type="entry name" value="P-loop_NTPase"/>
</dbReference>
<dbReference type="NCBIfam" id="TIGR02729">
    <property type="entry name" value="Obg_CgtA"/>
    <property type="match status" value="1"/>
</dbReference>
<dbReference type="NCBIfam" id="NF008955">
    <property type="entry name" value="PRK12297.1"/>
    <property type="match status" value="1"/>
</dbReference>
<dbReference type="NCBIfam" id="NF008956">
    <property type="entry name" value="PRK12299.1"/>
    <property type="match status" value="1"/>
</dbReference>
<dbReference type="PANTHER" id="PTHR11702">
    <property type="entry name" value="DEVELOPMENTALLY REGULATED GTP-BINDING PROTEIN-RELATED"/>
    <property type="match status" value="1"/>
</dbReference>
<dbReference type="PANTHER" id="PTHR11702:SF31">
    <property type="entry name" value="MITOCHONDRIAL RIBOSOME-ASSOCIATED GTPASE 2"/>
    <property type="match status" value="1"/>
</dbReference>
<dbReference type="Pfam" id="PF01018">
    <property type="entry name" value="GTP1_OBG"/>
    <property type="match status" value="1"/>
</dbReference>
<dbReference type="Pfam" id="PF01926">
    <property type="entry name" value="MMR_HSR1"/>
    <property type="match status" value="1"/>
</dbReference>
<dbReference type="PIRSF" id="PIRSF002401">
    <property type="entry name" value="GTP_bd_Obg/CgtA"/>
    <property type="match status" value="1"/>
</dbReference>
<dbReference type="PRINTS" id="PR00326">
    <property type="entry name" value="GTP1OBG"/>
</dbReference>
<dbReference type="SUPFAM" id="SSF82051">
    <property type="entry name" value="Obg GTP-binding protein N-terminal domain"/>
    <property type="match status" value="1"/>
</dbReference>
<dbReference type="SUPFAM" id="SSF52540">
    <property type="entry name" value="P-loop containing nucleoside triphosphate hydrolases"/>
    <property type="match status" value="1"/>
</dbReference>
<dbReference type="PROSITE" id="PS51710">
    <property type="entry name" value="G_OBG"/>
    <property type="match status" value="1"/>
</dbReference>
<dbReference type="PROSITE" id="PS51883">
    <property type="entry name" value="OBG"/>
    <property type="match status" value="1"/>
</dbReference>